<keyword id="KW-1015">Disulfide bond</keyword>
<keyword id="KW-0378">Hydrolase</keyword>
<keyword id="KW-0391">Immunity</keyword>
<keyword id="KW-0399">Innate immunity</keyword>
<keyword id="KW-0479">Metal-binding</keyword>
<keyword id="KW-0964">Secreted</keyword>
<keyword id="KW-0732">Signal</keyword>
<keyword id="KW-0862">Zinc</keyword>
<comment type="function">
    <text evidence="1">N-acetylmuramyl-L-alanine amidase involved in innate immunity by degrading bacterial peptidoglycans (PGN). Plays a scavenger role by digesting biologically active PGN into biologically inactive fragments. Has no direct bacteriolytic activity (By similarity).</text>
</comment>
<comment type="catalytic activity">
    <reaction>
        <text>Hydrolyzes the link between N-acetylmuramoyl residues and L-amino acid residues in certain cell-wall glycopeptides.</text>
        <dbReference type="EC" id="3.5.1.28"/>
    </reaction>
</comment>
<comment type="cofactor">
    <cofactor evidence="3">
        <name>Zn(2+)</name>
        <dbReference type="ChEBI" id="CHEBI:29105"/>
    </cofactor>
</comment>
<comment type="subcellular location">
    <subcellularLocation>
        <location evidence="5">Secreted</location>
    </subcellularLocation>
</comment>
<comment type="similarity">
    <text evidence="5">Belongs to the N-acetylmuramoyl-L-alanine amidase 2 family.</text>
</comment>
<protein>
    <recommendedName>
        <fullName>Peptidoglycan-recognition protein SC1a/b</fullName>
        <ecNumber>3.5.1.28</ecNumber>
    </recommendedName>
</protein>
<name>PGSC1_DROSI</name>
<reference key="1">
    <citation type="journal article" date="2003" name="J. Mol. Evol.">
        <title>The evolution of parasite recognition genes in the innate immune system: purifying selection on Drosophila melanogaster peptidoglycan recognition proteins.</title>
        <authorList>
            <person name="Jiggins F.M."/>
            <person name="Hurst G.D.D."/>
        </authorList>
    </citation>
    <scope>NUCLEOTIDE SEQUENCE [GENOMIC DNA]</scope>
    <source>
        <strain>C167.4</strain>
    </source>
</reference>
<accession>Q70PU2</accession>
<sequence length="185" mass="20366">MVSKVALLLAVLVCSQYMAQGVYVVSKAEWGGRGAKWTVALGNYLSYAIIHHTAGSYCETRAQCNAVLQSVQAYHMDSLGWPDIGYNFLIGGDGNVYEGRGWNNMGAHAAEWNPYSIGISFLGNYNWDTLEPNMISAAQQLLNDAVNRGQLSSGYILYGHRQVSATECPGTHIWNEIRGWSHWSG</sequence>
<dbReference type="EC" id="3.5.1.28"/>
<dbReference type="EMBL" id="AJ556587">
    <property type="protein sequence ID" value="CAD89152.1"/>
    <property type="molecule type" value="Genomic_DNA"/>
</dbReference>
<dbReference type="EMBL" id="AJ556610">
    <property type="protein sequence ID" value="CAD89175.1"/>
    <property type="molecule type" value="Genomic_DNA"/>
</dbReference>
<dbReference type="SMR" id="Q70PU2"/>
<dbReference type="OrthoDB" id="6151684at2759"/>
<dbReference type="GO" id="GO:0005576">
    <property type="term" value="C:extracellular region"/>
    <property type="evidence" value="ECO:0007669"/>
    <property type="project" value="UniProtKB-SubCell"/>
</dbReference>
<dbReference type="GO" id="GO:0008745">
    <property type="term" value="F:N-acetylmuramoyl-L-alanine amidase activity"/>
    <property type="evidence" value="ECO:0007669"/>
    <property type="project" value="UniProtKB-EC"/>
</dbReference>
<dbReference type="GO" id="GO:0042834">
    <property type="term" value="F:peptidoglycan binding"/>
    <property type="evidence" value="ECO:0007669"/>
    <property type="project" value="InterPro"/>
</dbReference>
<dbReference type="GO" id="GO:0008270">
    <property type="term" value="F:zinc ion binding"/>
    <property type="evidence" value="ECO:0007669"/>
    <property type="project" value="InterPro"/>
</dbReference>
<dbReference type="GO" id="GO:0045087">
    <property type="term" value="P:innate immune response"/>
    <property type="evidence" value="ECO:0007669"/>
    <property type="project" value="UniProtKB-KW"/>
</dbReference>
<dbReference type="GO" id="GO:0009253">
    <property type="term" value="P:peptidoglycan catabolic process"/>
    <property type="evidence" value="ECO:0007669"/>
    <property type="project" value="InterPro"/>
</dbReference>
<dbReference type="CDD" id="cd06583">
    <property type="entry name" value="PGRP"/>
    <property type="match status" value="1"/>
</dbReference>
<dbReference type="FunFam" id="3.40.80.10:FF:000001">
    <property type="entry name" value="Peptidoglycan recognition protein 1"/>
    <property type="match status" value="1"/>
</dbReference>
<dbReference type="Gene3D" id="3.40.80.10">
    <property type="entry name" value="Peptidoglycan recognition protein-like"/>
    <property type="match status" value="1"/>
</dbReference>
<dbReference type="InterPro" id="IPR036505">
    <property type="entry name" value="Amidase/PGRP_sf"/>
</dbReference>
<dbReference type="InterPro" id="IPR002502">
    <property type="entry name" value="Amidase_domain"/>
</dbReference>
<dbReference type="InterPro" id="IPR017331">
    <property type="entry name" value="Peptidoglycan_recognition"/>
</dbReference>
<dbReference type="InterPro" id="IPR015510">
    <property type="entry name" value="PGRP"/>
</dbReference>
<dbReference type="InterPro" id="IPR006619">
    <property type="entry name" value="PGRP_domain_met/bac"/>
</dbReference>
<dbReference type="PANTHER" id="PTHR11022">
    <property type="entry name" value="PEPTIDOGLYCAN RECOGNITION PROTEIN"/>
    <property type="match status" value="1"/>
</dbReference>
<dbReference type="PANTHER" id="PTHR11022:SF75">
    <property type="entry name" value="PEPTIDOGLYCAN-RECOGNITION PROTEIN SB1-RELATED"/>
    <property type="match status" value="1"/>
</dbReference>
<dbReference type="Pfam" id="PF01510">
    <property type="entry name" value="Amidase_2"/>
    <property type="match status" value="1"/>
</dbReference>
<dbReference type="PIRSF" id="PIRSF037945">
    <property type="entry name" value="PGRPs"/>
    <property type="match status" value="1"/>
</dbReference>
<dbReference type="SMART" id="SM00644">
    <property type="entry name" value="Ami_2"/>
    <property type="match status" value="1"/>
</dbReference>
<dbReference type="SMART" id="SM00701">
    <property type="entry name" value="PGRP"/>
    <property type="match status" value="1"/>
</dbReference>
<dbReference type="SUPFAM" id="SSF55846">
    <property type="entry name" value="N-acetylmuramoyl-L-alanine amidase-like"/>
    <property type="match status" value="1"/>
</dbReference>
<gene>
    <name type="primary">PGRP-SC1a</name>
</gene>
<gene>
    <name type="primary">PGRP-SC1b</name>
</gene>
<proteinExistence type="inferred from homology"/>
<evidence type="ECO:0000250" key="1"/>
<evidence type="ECO:0000250" key="2">
    <source>
        <dbReference type="UniProtKB" id="P00806"/>
    </source>
</evidence>
<evidence type="ECO:0000250" key="3">
    <source>
        <dbReference type="UniProtKB" id="Q8INK6"/>
    </source>
</evidence>
<evidence type="ECO:0000255" key="4"/>
<evidence type="ECO:0000305" key="5"/>
<organism>
    <name type="scientific">Drosophila simulans</name>
    <name type="common">Fruit fly</name>
    <dbReference type="NCBI Taxonomy" id="7240"/>
    <lineage>
        <taxon>Eukaryota</taxon>
        <taxon>Metazoa</taxon>
        <taxon>Ecdysozoa</taxon>
        <taxon>Arthropoda</taxon>
        <taxon>Hexapoda</taxon>
        <taxon>Insecta</taxon>
        <taxon>Pterygota</taxon>
        <taxon>Neoptera</taxon>
        <taxon>Endopterygota</taxon>
        <taxon>Diptera</taxon>
        <taxon>Brachycera</taxon>
        <taxon>Muscomorpha</taxon>
        <taxon>Ephydroidea</taxon>
        <taxon>Drosophilidae</taxon>
        <taxon>Drosophila</taxon>
        <taxon>Sophophora</taxon>
    </lineage>
</organism>
<feature type="signal peptide" evidence="4">
    <location>
        <begin position="1"/>
        <end position="21"/>
    </location>
</feature>
<feature type="chain" id="PRO_0000023911" description="Peptidoglycan-recognition protein SC1a/b">
    <location>
        <begin position="22"/>
        <end position="185"/>
    </location>
</feature>
<feature type="domain" description="N-acetylmuramoyl-L-alanine amidase" evidence="4">
    <location>
        <begin position="46"/>
        <end position="170"/>
    </location>
</feature>
<feature type="binding site" evidence="3">
    <location>
        <position position="51"/>
    </location>
    <ligand>
        <name>Zn(2+)</name>
        <dbReference type="ChEBI" id="CHEBI:29105"/>
    </ligand>
</feature>
<feature type="binding site" evidence="3">
    <location>
        <position position="160"/>
    </location>
    <ligand>
        <name>Zn(2+)</name>
        <dbReference type="ChEBI" id="CHEBI:29105"/>
    </ligand>
</feature>
<feature type="binding site" evidence="3">
    <location>
        <position position="168"/>
    </location>
    <ligand>
        <name>Zn(2+)</name>
        <dbReference type="ChEBI" id="CHEBI:29105"/>
    </ligand>
</feature>
<feature type="site" description="Important for catalytic activity; essential for amidase activity and zinc hydrate coordination" evidence="2">
    <location>
        <position position="86"/>
    </location>
</feature>
<feature type="disulfide bond" evidence="1">
    <location>
        <begin position="58"/>
        <end position="64"/>
    </location>
</feature>